<organism>
    <name type="scientific">Brucella anthropi (strain ATCC 49188 / DSM 6882 / CCUG 24695 / JCM 21032 / LMG 3331 / NBRC 15819 / NCTC 12168 / Alc 37)</name>
    <name type="common">Ochrobactrum anthropi</name>
    <dbReference type="NCBI Taxonomy" id="439375"/>
    <lineage>
        <taxon>Bacteria</taxon>
        <taxon>Pseudomonadati</taxon>
        <taxon>Pseudomonadota</taxon>
        <taxon>Alphaproteobacteria</taxon>
        <taxon>Hyphomicrobiales</taxon>
        <taxon>Brucellaceae</taxon>
        <taxon>Brucella/Ochrobactrum group</taxon>
        <taxon>Brucella</taxon>
    </lineage>
</organism>
<accession>A6X5D7</accession>
<protein>
    <recommendedName>
        <fullName evidence="1">Adenine deaminase</fullName>
        <shortName evidence="1">Adenase</shortName>
        <shortName evidence="1">Adenine aminase</shortName>
        <ecNumber evidence="1">3.5.4.2</ecNumber>
    </recommendedName>
</protein>
<reference key="1">
    <citation type="journal article" date="2011" name="J. Bacteriol.">
        <title>Genome of Ochrobactrum anthropi ATCC 49188 T, a versatile opportunistic pathogen and symbiont of several eukaryotic hosts.</title>
        <authorList>
            <person name="Chain P.S."/>
            <person name="Lang D.M."/>
            <person name="Comerci D.J."/>
            <person name="Malfatti S.A."/>
            <person name="Vergez L.M."/>
            <person name="Shin M."/>
            <person name="Ugalde R.A."/>
            <person name="Garcia E."/>
            <person name="Tolmasky M.E."/>
        </authorList>
    </citation>
    <scope>NUCLEOTIDE SEQUENCE [LARGE SCALE GENOMIC DNA]</scope>
    <source>
        <strain>ATCC 49188 / DSM 6882 / CCUG 24695 / JCM 21032 / LMG 3331 / NBRC 15819 / NCTC 12168 / Alc 37</strain>
    </source>
</reference>
<feature type="chain" id="PRO_0000318548" description="Adenine deaminase">
    <location>
        <begin position="1"/>
        <end position="563"/>
    </location>
</feature>
<sequence length="563" mass="60454">MLERMIDQGAGREPADIVLKGGRFFDLVTGELVESDIAICGDRIVGTFGNYQGKHEIDISGRIVVPGFIDTHLHIESSHVTPHEFDRCVLPQGVTTVICDPHEIANVLGAEGIKFFLDSALETVMDIRVQLSSCVPATHMETSGAELLIDDLLPFADHPKVIGLAEFMNFPGVLAKDPECMAKLKAFQGRHIDGHAPLLRGLDLNGYISAGIRTEHEATSAEEALEKMRKGMHVLVREGSVSKDLKALMPIITERHAQFLALCTDDRNPLDIADQGHLDYLIRTAIAGGVEPIAIYRAASVSAARAFGLFDRGLVAPGQRADLVVVDSLEGCHAEIVLSAGRVISEDLFAARKTVAPVGRNSVKASKVSASSFRSHSNSGKTRAIGIIPGKIITESLEFDLKVGPNGVEPDFEKDVVKIAVVERHGKNGNIATGFVHGFGLKSGAIASTVSHDSHNICVVGTSDEDIAAAANRLGEIEGGFVVVRDGKVLAEMPLPIAGLMSAEPYETVRDQLRVLRHAAEELGSVLEEPFLQLAFIALPVIPHLKITDRGLVDVDKFAFVGN</sequence>
<proteinExistence type="inferred from homology"/>
<evidence type="ECO:0000255" key="1">
    <source>
        <dbReference type="HAMAP-Rule" id="MF_01518"/>
    </source>
</evidence>
<comment type="catalytic activity">
    <reaction evidence="1">
        <text>adenine + H2O + H(+) = hypoxanthine + NH4(+)</text>
        <dbReference type="Rhea" id="RHEA:23688"/>
        <dbReference type="ChEBI" id="CHEBI:15377"/>
        <dbReference type="ChEBI" id="CHEBI:15378"/>
        <dbReference type="ChEBI" id="CHEBI:16708"/>
        <dbReference type="ChEBI" id="CHEBI:17368"/>
        <dbReference type="ChEBI" id="CHEBI:28938"/>
        <dbReference type="EC" id="3.5.4.2"/>
    </reaction>
</comment>
<comment type="cofactor">
    <cofactor evidence="1">
        <name>Mn(2+)</name>
        <dbReference type="ChEBI" id="CHEBI:29035"/>
    </cofactor>
</comment>
<comment type="similarity">
    <text evidence="1">Belongs to the metallo-dependent hydrolases superfamily. Adenine deaminase family.</text>
</comment>
<keyword id="KW-0378">Hydrolase</keyword>
<keyword id="KW-0464">Manganese</keyword>
<keyword id="KW-1185">Reference proteome</keyword>
<dbReference type="EC" id="3.5.4.2" evidence="1"/>
<dbReference type="EMBL" id="CP000759">
    <property type="protein sequence ID" value="ABS16441.1"/>
    <property type="molecule type" value="Genomic_DNA"/>
</dbReference>
<dbReference type="SMR" id="A6X5D7"/>
<dbReference type="STRING" id="439375.Oant_3735"/>
<dbReference type="KEGG" id="oan:Oant_3735"/>
<dbReference type="PATRIC" id="fig|439375.7.peg.3899"/>
<dbReference type="eggNOG" id="COG1001">
    <property type="taxonomic scope" value="Bacteria"/>
</dbReference>
<dbReference type="HOGENOM" id="CLU_027935_0_0_5"/>
<dbReference type="PhylomeDB" id="A6X5D7"/>
<dbReference type="Proteomes" id="UP000002301">
    <property type="component" value="Chromosome 2"/>
</dbReference>
<dbReference type="GO" id="GO:0000034">
    <property type="term" value="F:adenine deaminase activity"/>
    <property type="evidence" value="ECO:0007669"/>
    <property type="project" value="UniProtKB-UniRule"/>
</dbReference>
<dbReference type="GO" id="GO:0006146">
    <property type="term" value="P:adenine catabolic process"/>
    <property type="evidence" value="ECO:0007669"/>
    <property type="project" value="InterPro"/>
</dbReference>
<dbReference type="CDD" id="cd01295">
    <property type="entry name" value="AdeC"/>
    <property type="match status" value="1"/>
</dbReference>
<dbReference type="Gene3D" id="3.20.20.140">
    <property type="entry name" value="Metal-dependent hydrolases"/>
    <property type="match status" value="1"/>
</dbReference>
<dbReference type="Gene3D" id="2.30.40.10">
    <property type="entry name" value="Urease, subunit C, domain 1"/>
    <property type="match status" value="1"/>
</dbReference>
<dbReference type="HAMAP" id="MF_01518">
    <property type="entry name" value="Adenine_deamin"/>
    <property type="match status" value="1"/>
</dbReference>
<dbReference type="InterPro" id="IPR006679">
    <property type="entry name" value="Adenine_deam"/>
</dbReference>
<dbReference type="InterPro" id="IPR026912">
    <property type="entry name" value="Adenine_deam_C"/>
</dbReference>
<dbReference type="InterPro" id="IPR006680">
    <property type="entry name" value="Amidohydro-rel"/>
</dbReference>
<dbReference type="InterPro" id="IPR011059">
    <property type="entry name" value="Metal-dep_hydrolase_composite"/>
</dbReference>
<dbReference type="InterPro" id="IPR032466">
    <property type="entry name" value="Metal_Hydrolase"/>
</dbReference>
<dbReference type="NCBIfam" id="TIGR01178">
    <property type="entry name" value="ade"/>
    <property type="match status" value="1"/>
</dbReference>
<dbReference type="PANTHER" id="PTHR11113:SF2">
    <property type="entry name" value="ADENINE DEAMINASE"/>
    <property type="match status" value="1"/>
</dbReference>
<dbReference type="PANTHER" id="PTHR11113">
    <property type="entry name" value="N-ACETYLGLUCOSAMINE-6-PHOSPHATE DEACETYLASE"/>
    <property type="match status" value="1"/>
</dbReference>
<dbReference type="Pfam" id="PF13382">
    <property type="entry name" value="Adenine_deam_C"/>
    <property type="match status" value="1"/>
</dbReference>
<dbReference type="Pfam" id="PF01979">
    <property type="entry name" value="Amidohydro_1"/>
    <property type="match status" value="1"/>
</dbReference>
<dbReference type="SUPFAM" id="SSF51338">
    <property type="entry name" value="Composite domain of metallo-dependent hydrolases"/>
    <property type="match status" value="1"/>
</dbReference>
<dbReference type="SUPFAM" id="SSF51556">
    <property type="entry name" value="Metallo-dependent hydrolases"/>
    <property type="match status" value="1"/>
</dbReference>
<name>ADEC_BRUA4</name>
<gene>
    <name evidence="1" type="primary">ade</name>
    <name type="ordered locus">Oant_3735</name>
</gene>